<sequence length="61" mass="7246">MAKKSMIAKQKRTPKFKVQEYTRCERCGRPHSVIRKFKLCRICFRELAYKGQIPGVKKASW</sequence>
<organism>
    <name type="scientific">Bacillus licheniformis (strain ATCC 14580 / DSM 13 / JCM 2505 / CCUG 7422 / NBRC 12200 / NCIMB 9375 / NCTC 10341 / NRRL NRS-1264 / Gibson 46)</name>
    <dbReference type="NCBI Taxonomy" id="279010"/>
    <lineage>
        <taxon>Bacteria</taxon>
        <taxon>Bacillati</taxon>
        <taxon>Bacillota</taxon>
        <taxon>Bacilli</taxon>
        <taxon>Bacillales</taxon>
        <taxon>Bacillaceae</taxon>
        <taxon>Bacillus</taxon>
    </lineage>
</organism>
<protein>
    <recommendedName>
        <fullName evidence="1">Small ribosomal subunit protein uS14B</fullName>
    </recommendedName>
    <alternativeName>
        <fullName evidence="2">30S ribosomal protein S14 type Z 1</fullName>
    </alternativeName>
</protein>
<evidence type="ECO:0000255" key="1">
    <source>
        <dbReference type="HAMAP-Rule" id="MF_01364"/>
    </source>
</evidence>
<evidence type="ECO:0000305" key="2"/>
<comment type="function">
    <text evidence="1">Binds 16S rRNA, required for the assembly of 30S particles and may also be responsible for determining the conformation of the 16S rRNA at the A site.</text>
</comment>
<comment type="cofactor">
    <cofactor evidence="1">
        <name>Zn(2+)</name>
        <dbReference type="ChEBI" id="CHEBI:29105"/>
    </cofactor>
    <text evidence="1">Binds 1 zinc ion per subunit.</text>
</comment>
<comment type="subunit">
    <text evidence="1">Part of the 30S ribosomal subunit. Contacts proteins S3 and S10.</text>
</comment>
<comment type="similarity">
    <text evidence="1">Belongs to the universal ribosomal protein uS14 family. Zinc-binding uS14 subfamily.</text>
</comment>
<feature type="chain" id="PRO_0000269082" description="Small ribosomal subunit protein uS14B">
    <location>
        <begin position="1"/>
        <end position="61"/>
    </location>
</feature>
<feature type="binding site" evidence="1">
    <location>
        <position position="24"/>
    </location>
    <ligand>
        <name>Zn(2+)</name>
        <dbReference type="ChEBI" id="CHEBI:29105"/>
    </ligand>
</feature>
<feature type="binding site" evidence="1">
    <location>
        <position position="27"/>
    </location>
    <ligand>
        <name>Zn(2+)</name>
        <dbReference type="ChEBI" id="CHEBI:29105"/>
    </ligand>
</feature>
<feature type="binding site" evidence="1">
    <location>
        <position position="40"/>
    </location>
    <ligand>
        <name>Zn(2+)</name>
        <dbReference type="ChEBI" id="CHEBI:29105"/>
    </ligand>
</feature>
<feature type="binding site" evidence="1">
    <location>
        <position position="43"/>
    </location>
    <ligand>
        <name>Zn(2+)</name>
        <dbReference type="ChEBI" id="CHEBI:29105"/>
    </ligand>
</feature>
<reference key="1">
    <citation type="journal article" date="2004" name="J. Mol. Microbiol. Biotechnol.">
        <title>The complete genome sequence of Bacillus licheniformis DSM13, an organism with great industrial potential.</title>
        <authorList>
            <person name="Veith B."/>
            <person name="Herzberg C."/>
            <person name="Steckel S."/>
            <person name="Feesche J."/>
            <person name="Maurer K.H."/>
            <person name="Ehrenreich P."/>
            <person name="Baeumer S."/>
            <person name="Henne A."/>
            <person name="Liesegang H."/>
            <person name="Merkl R."/>
            <person name="Ehrenreich A."/>
            <person name="Gottschalk G."/>
        </authorList>
    </citation>
    <scope>NUCLEOTIDE SEQUENCE [LARGE SCALE GENOMIC DNA]</scope>
    <source>
        <strain>ATCC 14580 / DSM 13 / JCM 2505 / CCUG 7422 / NBRC 12200 / NCIMB 9375 / NCTC 10341 / NRRL NRS-1264 / Gibson 46</strain>
    </source>
</reference>
<reference key="2">
    <citation type="journal article" date="2004" name="Genome Biol.">
        <title>Complete genome sequence of the industrial bacterium Bacillus licheniformis and comparisons with closely related Bacillus species.</title>
        <authorList>
            <person name="Rey M.W."/>
            <person name="Ramaiya P."/>
            <person name="Nelson B.A."/>
            <person name="Brody-Karpin S.D."/>
            <person name="Zaretsky E.J."/>
            <person name="Tang M."/>
            <person name="Lopez de Leon A."/>
            <person name="Xiang H."/>
            <person name="Gusti V."/>
            <person name="Clausen I.G."/>
            <person name="Olsen P.B."/>
            <person name="Rasmussen M.D."/>
            <person name="Andersen J.T."/>
            <person name="Joergensen P.L."/>
            <person name="Larsen T.S."/>
            <person name="Sorokin A."/>
            <person name="Bolotin A."/>
            <person name="Lapidus A."/>
            <person name="Galleron N."/>
            <person name="Ehrlich S.D."/>
            <person name="Berka R.M."/>
        </authorList>
    </citation>
    <scope>NUCLEOTIDE SEQUENCE [LARGE SCALE GENOMIC DNA]</scope>
    <source>
        <strain>ATCC 14580 / DSM 13 / JCM 2505 / CCUG 7422 / NBRC 12200 / NCIMB 9375 / NCTC 10341 / NRRL NRS-1264 / Gibson 46</strain>
    </source>
</reference>
<keyword id="KW-0479">Metal-binding</keyword>
<keyword id="KW-1185">Reference proteome</keyword>
<keyword id="KW-0687">Ribonucleoprotein</keyword>
<keyword id="KW-0689">Ribosomal protein</keyword>
<keyword id="KW-0694">RNA-binding</keyword>
<keyword id="KW-0699">rRNA-binding</keyword>
<keyword id="KW-0862">Zinc</keyword>
<dbReference type="EMBL" id="AE017333">
    <property type="protein sequence ID" value="AAU39120.1"/>
    <property type="molecule type" value="Genomic_DNA"/>
</dbReference>
<dbReference type="EMBL" id="CP000002">
    <property type="protein sequence ID" value="AAU21775.1"/>
    <property type="molecule type" value="Genomic_DNA"/>
</dbReference>
<dbReference type="SMR" id="Q65P94"/>
<dbReference type="STRING" id="279010.BL01038"/>
<dbReference type="KEGG" id="bld:BLi00146"/>
<dbReference type="KEGG" id="bli:BL01038"/>
<dbReference type="eggNOG" id="COG0199">
    <property type="taxonomic scope" value="Bacteria"/>
</dbReference>
<dbReference type="HOGENOM" id="CLU_139869_3_0_9"/>
<dbReference type="Proteomes" id="UP000000606">
    <property type="component" value="Chromosome"/>
</dbReference>
<dbReference type="GO" id="GO:0015935">
    <property type="term" value="C:small ribosomal subunit"/>
    <property type="evidence" value="ECO:0007669"/>
    <property type="project" value="TreeGrafter"/>
</dbReference>
<dbReference type="GO" id="GO:0019843">
    <property type="term" value="F:rRNA binding"/>
    <property type="evidence" value="ECO:0007669"/>
    <property type="project" value="UniProtKB-UniRule"/>
</dbReference>
<dbReference type="GO" id="GO:0003735">
    <property type="term" value="F:structural constituent of ribosome"/>
    <property type="evidence" value="ECO:0007669"/>
    <property type="project" value="InterPro"/>
</dbReference>
<dbReference type="GO" id="GO:0008270">
    <property type="term" value="F:zinc ion binding"/>
    <property type="evidence" value="ECO:0007669"/>
    <property type="project" value="UniProtKB-UniRule"/>
</dbReference>
<dbReference type="GO" id="GO:0006412">
    <property type="term" value="P:translation"/>
    <property type="evidence" value="ECO:0007669"/>
    <property type="project" value="UniProtKB-UniRule"/>
</dbReference>
<dbReference type="FunFam" id="4.10.830.10:FF:000001">
    <property type="entry name" value="30S ribosomal protein S14 type Z"/>
    <property type="match status" value="1"/>
</dbReference>
<dbReference type="Gene3D" id="4.10.830.10">
    <property type="entry name" value="30s Ribosomal Protein S14, Chain N"/>
    <property type="match status" value="1"/>
</dbReference>
<dbReference type="HAMAP" id="MF_01364_B">
    <property type="entry name" value="Ribosomal_uS14_2_B"/>
    <property type="match status" value="1"/>
</dbReference>
<dbReference type="InterPro" id="IPR001209">
    <property type="entry name" value="Ribosomal_uS14"/>
</dbReference>
<dbReference type="InterPro" id="IPR023053">
    <property type="entry name" value="Ribosomal_uS14_bact"/>
</dbReference>
<dbReference type="InterPro" id="IPR018271">
    <property type="entry name" value="Ribosomal_uS14_CS"/>
</dbReference>
<dbReference type="InterPro" id="IPR043140">
    <property type="entry name" value="Ribosomal_uS14_sf"/>
</dbReference>
<dbReference type="NCBIfam" id="NF005974">
    <property type="entry name" value="PRK08061.1"/>
    <property type="match status" value="1"/>
</dbReference>
<dbReference type="PANTHER" id="PTHR19836">
    <property type="entry name" value="30S RIBOSOMAL PROTEIN S14"/>
    <property type="match status" value="1"/>
</dbReference>
<dbReference type="PANTHER" id="PTHR19836:SF26">
    <property type="entry name" value="SMALL RIBOSOMAL SUBUNIT PROTEIN US14B"/>
    <property type="match status" value="1"/>
</dbReference>
<dbReference type="Pfam" id="PF00253">
    <property type="entry name" value="Ribosomal_S14"/>
    <property type="match status" value="1"/>
</dbReference>
<dbReference type="SUPFAM" id="SSF57716">
    <property type="entry name" value="Glucocorticoid receptor-like (DNA-binding domain)"/>
    <property type="match status" value="1"/>
</dbReference>
<dbReference type="PROSITE" id="PS00527">
    <property type="entry name" value="RIBOSOMAL_S14"/>
    <property type="match status" value="1"/>
</dbReference>
<gene>
    <name evidence="1" type="primary">rpsZ1</name>
    <name evidence="1" type="synonym">rpsN1</name>
    <name evidence="1" type="synonym">rpsNAA</name>
    <name type="ordered locus">BLi00146</name>
    <name type="ordered locus">BL01038</name>
</gene>
<accession>Q65P94</accession>
<accession>Q62ZN3</accession>
<name>R14Z1_BACLD</name>
<proteinExistence type="inferred from homology"/>